<accession>Q4V8C8</accession>
<comment type="function">
    <text evidence="1">Tumor suppressor probably involved in transcriptional and post-transcriptional control pathways. May be involved in cell cycle progression through the regulation of cyclin D1/PRAD1 expression. Component of the PAF1 complex (PAF1C) which has multiple functions during transcription by RNA polymerase II and is implicated in regulation of development and maintenance of embryonic stem cell pluripotency. PAF1C associates with RNA polymerase II through interaction with POLR2A CTD non-phosphorylated and 'Ser-2'- and 'Ser-5'-phosphorylated forms and is involved in transcriptional elongation, acting both independently and synergistically with TCEA1 and in cooperation with the DSIF complex and HTATSF1. PAF1C is required for transcription of Hox and Wnt target genes. PAF1C is involved in hematopoiesis and stimulates transcriptional activity of KMT2A/MLL1. PAF1C is involved in histone modifications such as ubiquitination of histone H2B and methylation on histone H3 'Lys-4' (H3K4me3). PAF1C recruits the RNF20/40 E3 ubiquitin-protein ligase complex and the E2 enzyme UBE2A or UBE2B to chromatin which mediate monoubiquitination of 'Lys-120' of histone H2B (H2BK120ub1); UB2A/B-mediated H2B ubiquitination is proposed to be coupled to transcription. PAF1C is involved in mRNA 3' end formation probably through association with cleavage and poly(A) factors. Connects PAF1C with the cleavage and polyadenylation specificity factor (CPSF) complex and the cleavage stimulation factor (CSTF) complex, and with Wnt signaling. Involved in polyadenylation of mRNA precursors (By similarity).</text>
</comment>
<comment type="subunit">
    <text evidence="2 3">Component of the PAF1 complex, which consists of CDC73, PAF1, LEO1, CTR9, RTF1 and SKIC8 (By similarity). The PAF1 complex interacts with PHF5A. Within the PAF1 complex interacts directly with PHF5A (By similarity). Interacts with POLR2A, CPSF1, CPSF4, CSTF2, KMT2A/MLL1 and CTNNB1. Interacts with a Set1-like complex that has histone methyltransferase activity and methylates histone H3. Found in a complex with BCL9L or BCL9, CDC73, CTNNB1 and PYGO1 indicative for the participation in a nuclear Wnt signaling complex. Interacts with PTPN11 (By similarity). Interacts with SETD5 (By similarity).</text>
</comment>
<comment type="subcellular location">
    <subcellularLocation>
        <location evidence="1">Nucleus</location>
    </subcellularLocation>
</comment>
<comment type="PTM">
    <text evidence="2">Phosphorylated. Dephosphorylated by PTPN11.</text>
</comment>
<comment type="similarity">
    <text evidence="5">Belongs to the CDC73 family.</text>
</comment>
<keyword id="KW-0007">Acetylation</keyword>
<keyword id="KW-0131">Cell cycle</keyword>
<keyword id="KW-1017">Isopeptide bond</keyword>
<keyword id="KW-0539">Nucleus</keyword>
<keyword id="KW-0597">Phosphoprotein</keyword>
<keyword id="KW-1185">Reference proteome</keyword>
<keyword id="KW-0804">Transcription</keyword>
<keyword id="KW-0043">Tumor suppressor</keyword>
<keyword id="KW-0832">Ubl conjugation</keyword>
<keyword id="KW-0879">Wnt signaling pathway</keyword>
<evidence type="ECO:0000250" key="1"/>
<evidence type="ECO:0000250" key="2">
    <source>
        <dbReference type="UniProtKB" id="Q6P1J9"/>
    </source>
</evidence>
<evidence type="ECO:0000250" key="3">
    <source>
        <dbReference type="UniProtKB" id="Q8JZM7"/>
    </source>
</evidence>
<evidence type="ECO:0000256" key="4">
    <source>
        <dbReference type="SAM" id="MobiDB-lite"/>
    </source>
</evidence>
<evidence type="ECO:0000305" key="5"/>
<sequence>MADVLSVLRQYNIQKKEIVVKGDEVIFGEFSWPKNVKTNYVVWGTGKEGQPREYYTLDSILFLLNNVHLSHPVYVRRAATENIPVVRRPDRKDLLGYLNGEASTSASIDRSAPLEIGLQRSTQVKRAADEVLAEAKKPRIEDEECVRLDKERLAARLEGHKEGIVQTEQIRSLSEAMLVEKIAAIKAKIMAKKRSTIKTDLDDDITALKQRSFVDAEVDVTRDIVSRERVWRTRTTILQSTGKNFSKNIFAILQSVKAREEGRAPEQRPAPNAAPVDPTLRTKQPIPAAYNRYDQERFKGKEETEGFKIDTMGTYHGMTLKSVTEGASARKTQTPAAQPVPRPVSQARPPPNQKKGSRTPIIIIPAATTSLITMLNAKDLLQDLKFVPSDEKKKQGCQRENETLIQRRKDQMQPGGTAISVTVPYRVVDQPLKLMPQDWDRVVAVFVQGPAWQFKGWPWLLPDGSPVDIFAKIKAFHLKYDEVRLDPNVQKWDVTVLELSYHKRHLDRPVFLRFWETLDRYMVKHKSHLRF</sequence>
<protein>
    <recommendedName>
        <fullName>Parafibromin</fullName>
    </recommendedName>
    <alternativeName>
        <fullName>Cell division cycle protein 73 homolog</fullName>
    </alternativeName>
    <alternativeName>
        <fullName>Hyperparathyroidism 2 protein homolog</fullName>
    </alternativeName>
</protein>
<reference key="1">
    <citation type="journal article" date="2004" name="Genome Res.">
        <title>The status, quality, and expansion of the NIH full-length cDNA project: the Mammalian Gene Collection (MGC).</title>
        <authorList>
            <consortium name="The MGC Project Team"/>
        </authorList>
    </citation>
    <scope>NUCLEOTIDE SEQUENCE [LARGE SCALE MRNA]</scope>
    <source>
        <tissue>Testis</tissue>
    </source>
</reference>
<feature type="initiator methionine" description="Removed" evidence="2">
    <location>
        <position position="1"/>
    </location>
</feature>
<feature type="chain" id="PRO_0000191805" description="Parafibromin">
    <location>
        <begin position="2"/>
        <end position="531"/>
    </location>
</feature>
<feature type="region of interest" description="Interaction with POLR2A and PAF1" evidence="1">
    <location>
        <begin position="200"/>
        <end position="531"/>
    </location>
</feature>
<feature type="region of interest" description="Interaction with CTNNB1" evidence="1">
    <location>
        <begin position="200"/>
        <end position="250"/>
    </location>
</feature>
<feature type="region of interest" description="Disordered" evidence="4">
    <location>
        <begin position="260"/>
        <end position="292"/>
    </location>
</feature>
<feature type="region of interest" description="Disordered" evidence="4">
    <location>
        <begin position="325"/>
        <end position="358"/>
    </location>
</feature>
<feature type="short sequence motif" description="Nuclear localization signal" evidence="1">
    <location>
        <begin position="125"/>
        <end position="139"/>
    </location>
</feature>
<feature type="compositionally biased region" description="Pro residues" evidence="4">
    <location>
        <begin position="338"/>
        <end position="352"/>
    </location>
</feature>
<feature type="modified residue" description="N-acetylalanine" evidence="2">
    <location>
        <position position="2"/>
    </location>
</feature>
<feature type="modified residue" description="Phosphoserine" evidence="2">
    <location>
        <position position="212"/>
    </location>
</feature>
<feature type="cross-link" description="Glycyl lysine isopeptide (Lys-Gly) (interchain with G-Cter in SUMO2)" evidence="2">
    <location>
        <position position="198"/>
    </location>
</feature>
<feature type="cross-link" description="Glycyl lysine isopeptide (Lys-Gly) (interchain with G-Cter in SUMO2)" evidence="2">
    <location>
        <position position="301"/>
    </location>
</feature>
<feature type="cross-link" description="Glycyl lysine isopeptide (Lys-Gly) (interchain with G-Cter in SUMO2)" evidence="2">
    <location>
        <position position="308"/>
    </location>
</feature>
<feature type="cross-link" description="Glycyl lysine isopeptide (Lys-Gly) (interchain with G-Cter in SUMO2)" evidence="2">
    <location>
        <position position="321"/>
    </location>
</feature>
<gene>
    <name type="primary">Cdc73</name>
    <name type="synonym">Hrpt2</name>
</gene>
<name>CDC73_RAT</name>
<proteinExistence type="evidence at transcript level"/>
<organism>
    <name type="scientific">Rattus norvegicus</name>
    <name type="common">Rat</name>
    <dbReference type="NCBI Taxonomy" id="10116"/>
    <lineage>
        <taxon>Eukaryota</taxon>
        <taxon>Metazoa</taxon>
        <taxon>Chordata</taxon>
        <taxon>Craniata</taxon>
        <taxon>Vertebrata</taxon>
        <taxon>Euteleostomi</taxon>
        <taxon>Mammalia</taxon>
        <taxon>Eutheria</taxon>
        <taxon>Euarchontoglires</taxon>
        <taxon>Glires</taxon>
        <taxon>Rodentia</taxon>
        <taxon>Myomorpha</taxon>
        <taxon>Muroidea</taxon>
        <taxon>Muridae</taxon>
        <taxon>Murinae</taxon>
        <taxon>Rattus</taxon>
    </lineage>
</organism>
<dbReference type="EMBL" id="BC097445">
    <property type="protein sequence ID" value="AAH97445.1"/>
    <property type="molecule type" value="mRNA"/>
</dbReference>
<dbReference type="RefSeq" id="NP_001019940.1">
    <property type="nucleotide sequence ID" value="NM_001024769.1"/>
</dbReference>
<dbReference type="SMR" id="Q4V8C8"/>
<dbReference type="BioGRID" id="257997">
    <property type="interactions" value="1"/>
</dbReference>
<dbReference type="FunCoup" id="Q4V8C8">
    <property type="interactions" value="4722"/>
</dbReference>
<dbReference type="IntAct" id="Q4V8C8">
    <property type="interactions" value="4"/>
</dbReference>
<dbReference type="STRING" id="10116.ENSRNOP00000004495"/>
<dbReference type="iPTMnet" id="Q4V8C8"/>
<dbReference type="PhosphoSitePlus" id="Q4V8C8"/>
<dbReference type="jPOST" id="Q4V8C8"/>
<dbReference type="PaxDb" id="10116-ENSRNOP00000004495"/>
<dbReference type="GeneID" id="304832"/>
<dbReference type="KEGG" id="rno:304832"/>
<dbReference type="UCSC" id="RGD:1311766">
    <property type="organism name" value="rat"/>
</dbReference>
<dbReference type="AGR" id="RGD:1311766"/>
<dbReference type="CTD" id="79577"/>
<dbReference type="RGD" id="1311766">
    <property type="gene designation" value="Cdc73"/>
</dbReference>
<dbReference type="eggNOG" id="KOG3786">
    <property type="taxonomic scope" value="Eukaryota"/>
</dbReference>
<dbReference type="InParanoid" id="Q4V8C8"/>
<dbReference type="OrthoDB" id="26692at9989"/>
<dbReference type="PhylomeDB" id="Q4V8C8"/>
<dbReference type="Reactome" id="R-RNO-112382">
    <property type="pathway name" value="Formation of RNA Pol II elongation complex"/>
</dbReference>
<dbReference type="Reactome" id="R-RNO-201722">
    <property type="pathway name" value="Formation of the beta-catenin:TCF transactivating complex"/>
</dbReference>
<dbReference type="Reactome" id="R-RNO-5632684">
    <property type="pathway name" value="Hedgehog 'on' state"/>
</dbReference>
<dbReference type="Reactome" id="R-RNO-674695">
    <property type="pathway name" value="RNA Polymerase II Pre-transcription Events"/>
</dbReference>
<dbReference type="Reactome" id="R-RNO-75955">
    <property type="pathway name" value="RNA Polymerase II Transcription Elongation"/>
</dbReference>
<dbReference type="Reactome" id="R-RNO-8866654">
    <property type="pathway name" value="E3 ubiquitin ligases ubiquitinate target proteins"/>
</dbReference>
<dbReference type="PRO" id="PR:Q4V8C8"/>
<dbReference type="Proteomes" id="UP000002494">
    <property type="component" value="Unplaced"/>
</dbReference>
<dbReference type="GO" id="GO:0016593">
    <property type="term" value="C:Cdc73/Paf1 complex"/>
    <property type="evidence" value="ECO:0000250"/>
    <property type="project" value="UniProtKB"/>
</dbReference>
<dbReference type="GO" id="GO:0005634">
    <property type="term" value="C:nucleus"/>
    <property type="evidence" value="ECO:0000250"/>
    <property type="project" value="UniProtKB"/>
</dbReference>
<dbReference type="GO" id="GO:0000993">
    <property type="term" value="F:RNA polymerase II complex binding"/>
    <property type="evidence" value="ECO:0000250"/>
    <property type="project" value="UniProtKB"/>
</dbReference>
<dbReference type="GO" id="GO:0071222">
    <property type="term" value="P:cellular response to lipopolysaccharide"/>
    <property type="evidence" value="ECO:0000250"/>
    <property type="project" value="UniProtKB"/>
</dbReference>
<dbReference type="GO" id="GO:0001711">
    <property type="term" value="P:endodermal cell fate commitment"/>
    <property type="evidence" value="ECO:0000250"/>
    <property type="project" value="UniProtKB"/>
</dbReference>
<dbReference type="GO" id="GO:0031124">
    <property type="term" value="P:mRNA 3'-end processing"/>
    <property type="evidence" value="ECO:0000250"/>
    <property type="project" value="UniProtKB"/>
</dbReference>
<dbReference type="GO" id="GO:0043066">
    <property type="term" value="P:negative regulation of apoptotic process"/>
    <property type="evidence" value="ECO:0000266"/>
    <property type="project" value="RGD"/>
</dbReference>
<dbReference type="GO" id="GO:0008285">
    <property type="term" value="P:negative regulation of cell population proliferation"/>
    <property type="evidence" value="ECO:0000250"/>
    <property type="project" value="UniProtKB"/>
</dbReference>
<dbReference type="GO" id="GO:0050680">
    <property type="term" value="P:negative regulation of epithelial cell proliferation"/>
    <property type="evidence" value="ECO:0000266"/>
    <property type="project" value="RGD"/>
</dbReference>
<dbReference type="GO" id="GO:0048147">
    <property type="term" value="P:negative regulation of fibroblast proliferation"/>
    <property type="evidence" value="ECO:0000266"/>
    <property type="project" value="RGD"/>
</dbReference>
<dbReference type="GO" id="GO:2000134">
    <property type="term" value="P:negative regulation of G1/S transition of mitotic cell cycle"/>
    <property type="evidence" value="ECO:0000250"/>
    <property type="project" value="UniProtKB"/>
</dbReference>
<dbReference type="GO" id="GO:0045638">
    <property type="term" value="P:negative regulation of myeloid cell differentiation"/>
    <property type="evidence" value="ECO:0000250"/>
    <property type="project" value="UniProtKB"/>
</dbReference>
<dbReference type="GO" id="GO:0000122">
    <property type="term" value="P:negative regulation of transcription by RNA polymerase II"/>
    <property type="evidence" value="ECO:0000250"/>
    <property type="project" value="UniProtKB"/>
</dbReference>
<dbReference type="GO" id="GO:1902808">
    <property type="term" value="P:positive regulation of cell cycle G1/S phase transition"/>
    <property type="evidence" value="ECO:0000250"/>
    <property type="project" value="UniProtKB"/>
</dbReference>
<dbReference type="GO" id="GO:0031442">
    <property type="term" value="P:positive regulation of mRNA 3'-end processing"/>
    <property type="evidence" value="ECO:0000250"/>
    <property type="project" value="UniProtKB"/>
</dbReference>
<dbReference type="GO" id="GO:0045944">
    <property type="term" value="P:positive regulation of transcription by RNA polymerase II"/>
    <property type="evidence" value="ECO:0000266"/>
    <property type="project" value="RGD"/>
</dbReference>
<dbReference type="GO" id="GO:0032968">
    <property type="term" value="P:positive regulation of transcription elongation by RNA polymerase II"/>
    <property type="evidence" value="ECO:0000318"/>
    <property type="project" value="GO_Central"/>
</dbReference>
<dbReference type="GO" id="GO:0030177">
    <property type="term" value="P:positive regulation of Wnt signaling pathway"/>
    <property type="evidence" value="ECO:0000250"/>
    <property type="project" value="UniProtKB"/>
</dbReference>
<dbReference type="GO" id="GO:0031648">
    <property type="term" value="P:protein destabilization"/>
    <property type="evidence" value="ECO:0000266"/>
    <property type="project" value="RGD"/>
</dbReference>
<dbReference type="GO" id="GO:0001558">
    <property type="term" value="P:regulation of cell growth"/>
    <property type="evidence" value="ECO:0000266"/>
    <property type="project" value="RGD"/>
</dbReference>
<dbReference type="GO" id="GO:0006357">
    <property type="term" value="P:regulation of transcription by RNA polymerase II"/>
    <property type="evidence" value="ECO:0000266"/>
    <property type="project" value="RGD"/>
</dbReference>
<dbReference type="GO" id="GO:0019827">
    <property type="term" value="P:stem cell population maintenance"/>
    <property type="evidence" value="ECO:0000250"/>
    <property type="project" value="UniProtKB"/>
</dbReference>
<dbReference type="GO" id="GO:0006368">
    <property type="term" value="P:transcription elongation by RNA polymerase II"/>
    <property type="evidence" value="ECO:0000250"/>
    <property type="project" value="UniProtKB"/>
</dbReference>
<dbReference type="GO" id="GO:0016055">
    <property type="term" value="P:Wnt signaling pathway"/>
    <property type="evidence" value="ECO:0007669"/>
    <property type="project" value="UniProtKB-KW"/>
</dbReference>
<dbReference type="FunFam" id="3.40.50.11990:FF:000001">
    <property type="entry name" value="Cell division cycle 73"/>
    <property type="match status" value="1"/>
</dbReference>
<dbReference type="Gene3D" id="3.40.50.11990">
    <property type="entry name" value="RNA polymerase II accessory factor, Cdc73 C-terminal domain"/>
    <property type="match status" value="1"/>
</dbReference>
<dbReference type="InterPro" id="IPR007852">
    <property type="entry name" value="Cdc73/Parafibromin"/>
</dbReference>
<dbReference type="InterPro" id="IPR031336">
    <property type="entry name" value="CDC73_C"/>
</dbReference>
<dbReference type="InterPro" id="IPR038103">
    <property type="entry name" value="CDC73_C_sf"/>
</dbReference>
<dbReference type="InterPro" id="IPR032041">
    <property type="entry name" value="Cdc73_N"/>
</dbReference>
<dbReference type="PANTHER" id="PTHR12466">
    <property type="entry name" value="CDC73 DOMAIN PROTEIN"/>
    <property type="match status" value="1"/>
</dbReference>
<dbReference type="PANTHER" id="PTHR12466:SF8">
    <property type="entry name" value="PARAFIBROMIN"/>
    <property type="match status" value="1"/>
</dbReference>
<dbReference type="Pfam" id="PF05179">
    <property type="entry name" value="CDC73_C"/>
    <property type="match status" value="1"/>
</dbReference>
<dbReference type="Pfam" id="PF16050">
    <property type="entry name" value="CDC73_N"/>
    <property type="match status" value="1"/>
</dbReference>